<dbReference type="EC" id="2.7.1.23" evidence="1"/>
<dbReference type="EMBL" id="U00021">
    <property type="protein sequence ID" value="AAA50923.1"/>
    <property type="molecule type" value="Genomic_DNA"/>
</dbReference>
<dbReference type="EMBL" id="Z95117">
    <property type="protein sequence ID" value="CAB08286.1"/>
    <property type="molecule type" value="Genomic_DNA"/>
</dbReference>
<dbReference type="EMBL" id="AL583921">
    <property type="protein sequence ID" value="CAC31740.1"/>
    <property type="molecule type" value="Genomic_DNA"/>
</dbReference>
<dbReference type="PIR" id="S72967">
    <property type="entry name" value="S72967"/>
</dbReference>
<dbReference type="RefSeq" id="NP_301969.1">
    <property type="nucleotide sequence ID" value="NC_002677.1"/>
</dbReference>
<dbReference type="RefSeq" id="WP_010908290.1">
    <property type="nucleotide sequence ID" value="NC_002677.1"/>
</dbReference>
<dbReference type="SMR" id="Q49897"/>
<dbReference type="STRING" id="272631.gene:17575197"/>
<dbReference type="KEGG" id="mle:ML1359"/>
<dbReference type="PATRIC" id="fig|272631.5.peg.2516"/>
<dbReference type="Leproma" id="ML1359"/>
<dbReference type="eggNOG" id="COG0061">
    <property type="taxonomic scope" value="Bacteria"/>
</dbReference>
<dbReference type="HOGENOM" id="CLU_008831_0_0_11"/>
<dbReference type="OrthoDB" id="9774737at2"/>
<dbReference type="Proteomes" id="UP000000806">
    <property type="component" value="Chromosome"/>
</dbReference>
<dbReference type="GO" id="GO:0005737">
    <property type="term" value="C:cytoplasm"/>
    <property type="evidence" value="ECO:0007669"/>
    <property type="project" value="UniProtKB-SubCell"/>
</dbReference>
<dbReference type="GO" id="GO:0005524">
    <property type="term" value="F:ATP binding"/>
    <property type="evidence" value="ECO:0007669"/>
    <property type="project" value="UniProtKB-KW"/>
</dbReference>
<dbReference type="GO" id="GO:0046872">
    <property type="term" value="F:metal ion binding"/>
    <property type="evidence" value="ECO:0007669"/>
    <property type="project" value="UniProtKB-UniRule"/>
</dbReference>
<dbReference type="GO" id="GO:0051287">
    <property type="term" value="F:NAD binding"/>
    <property type="evidence" value="ECO:0007669"/>
    <property type="project" value="UniProtKB-ARBA"/>
</dbReference>
<dbReference type="GO" id="GO:0003951">
    <property type="term" value="F:NAD+ kinase activity"/>
    <property type="evidence" value="ECO:0007669"/>
    <property type="project" value="UniProtKB-UniRule"/>
</dbReference>
<dbReference type="GO" id="GO:0019674">
    <property type="term" value="P:NAD metabolic process"/>
    <property type="evidence" value="ECO:0007669"/>
    <property type="project" value="InterPro"/>
</dbReference>
<dbReference type="GO" id="GO:0006741">
    <property type="term" value="P:NADP biosynthetic process"/>
    <property type="evidence" value="ECO:0007669"/>
    <property type="project" value="UniProtKB-UniRule"/>
</dbReference>
<dbReference type="FunFam" id="2.60.200.30:FF:000007">
    <property type="entry name" value="NAD kinase"/>
    <property type="match status" value="1"/>
</dbReference>
<dbReference type="Gene3D" id="3.40.50.10330">
    <property type="entry name" value="Probable inorganic polyphosphate/atp-NAD kinase, domain 1"/>
    <property type="match status" value="1"/>
</dbReference>
<dbReference type="Gene3D" id="2.60.200.30">
    <property type="entry name" value="Probable inorganic polyphosphate/atp-NAD kinase, domain 2"/>
    <property type="match status" value="1"/>
</dbReference>
<dbReference type="HAMAP" id="MF_00361">
    <property type="entry name" value="NAD_kinase"/>
    <property type="match status" value="1"/>
</dbReference>
<dbReference type="InterPro" id="IPR017438">
    <property type="entry name" value="ATP-NAD_kinase_N"/>
</dbReference>
<dbReference type="InterPro" id="IPR017437">
    <property type="entry name" value="ATP-NAD_kinase_PpnK-typ_C"/>
</dbReference>
<dbReference type="InterPro" id="IPR016064">
    <property type="entry name" value="NAD/diacylglycerol_kinase_sf"/>
</dbReference>
<dbReference type="InterPro" id="IPR002504">
    <property type="entry name" value="NADK"/>
</dbReference>
<dbReference type="NCBIfam" id="NF002892">
    <property type="entry name" value="PRK03372.1"/>
    <property type="match status" value="1"/>
</dbReference>
<dbReference type="PANTHER" id="PTHR20275">
    <property type="entry name" value="NAD KINASE"/>
    <property type="match status" value="1"/>
</dbReference>
<dbReference type="PANTHER" id="PTHR20275:SF0">
    <property type="entry name" value="NAD KINASE"/>
    <property type="match status" value="1"/>
</dbReference>
<dbReference type="Pfam" id="PF01513">
    <property type="entry name" value="NAD_kinase"/>
    <property type="match status" value="1"/>
</dbReference>
<dbReference type="Pfam" id="PF20143">
    <property type="entry name" value="NAD_kinase_C"/>
    <property type="match status" value="1"/>
</dbReference>
<dbReference type="SUPFAM" id="SSF111331">
    <property type="entry name" value="NAD kinase/diacylglycerol kinase-like"/>
    <property type="match status" value="1"/>
</dbReference>
<evidence type="ECO:0000255" key="1">
    <source>
        <dbReference type="HAMAP-Rule" id="MF_00361"/>
    </source>
</evidence>
<sequence length="311" mass="33218">MTPRKAAQRTVLLVVHTGRDEATETARRVKKIVGDNGIALRVLSAEAVDRGSLHLALDNMRAMGVDIEVVDADPHVAQGCELVLVLGGDGTFLRAAELARTARIPVLGVNLGRIGFLAEAEAEAIDVVLEHVIARSYRVEERLTLDIVVRQGGNIIDQGWALNEASLEKGPRLGVLGVVVEIEGRPVSTFGCDGVLVSTPTGSTAYAFSAGGPVLWPDLEAILVVPNNAHALFGRPMVTSPDATVAIELEANGNDALVFCDGRREMIIPAGGRLEVTRCATPVKWARLDSAPFTDRLVSKFRLPVTGWRGK</sequence>
<keyword id="KW-0067">ATP-binding</keyword>
<keyword id="KW-0963">Cytoplasm</keyword>
<keyword id="KW-0418">Kinase</keyword>
<keyword id="KW-0520">NAD</keyword>
<keyword id="KW-0521">NADP</keyword>
<keyword id="KW-0547">Nucleotide-binding</keyword>
<keyword id="KW-1185">Reference proteome</keyword>
<keyword id="KW-0808">Transferase</keyword>
<organism>
    <name type="scientific">Mycobacterium leprae (strain TN)</name>
    <dbReference type="NCBI Taxonomy" id="272631"/>
    <lineage>
        <taxon>Bacteria</taxon>
        <taxon>Bacillati</taxon>
        <taxon>Actinomycetota</taxon>
        <taxon>Actinomycetes</taxon>
        <taxon>Mycobacteriales</taxon>
        <taxon>Mycobacteriaceae</taxon>
        <taxon>Mycobacterium</taxon>
    </lineage>
</organism>
<reference key="1">
    <citation type="submission" date="1994-03" db="EMBL/GenBank/DDBJ databases">
        <authorList>
            <person name="Smith D.R."/>
            <person name="Robison K."/>
        </authorList>
    </citation>
    <scope>NUCLEOTIDE SEQUENCE [GENOMIC DNA]</scope>
</reference>
<reference key="2">
    <citation type="journal article" date="2001" name="Nature">
        <title>Massive gene decay in the leprosy bacillus.</title>
        <authorList>
            <person name="Cole S.T."/>
            <person name="Eiglmeier K."/>
            <person name="Parkhill J."/>
            <person name="James K.D."/>
            <person name="Thomson N.R."/>
            <person name="Wheeler P.R."/>
            <person name="Honore N."/>
            <person name="Garnier T."/>
            <person name="Churcher C.M."/>
            <person name="Harris D.E."/>
            <person name="Mungall K.L."/>
            <person name="Basham D."/>
            <person name="Brown D."/>
            <person name="Chillingworth T."/>
            <person name="Connor R."/>
            <person name="Davies R.M."/>
            <person name="Devlin K."/>
            <person name="Duthoy S."/>
            <person name="Feltwell T."/>
            <person name="Fraser A."/>
            <person name="Hamlin N."/>
            <person name="Holroyd S."/>
            <person name="Hornsby T."/>
            <person name="Jagels K."/>
            <person name="Lacroix C."/>
            <person name="Maclean J."/>
            <person name="Moule S."/>
            <person name="Murphy L.D."/>
            <person name="Oliver K."/>
            <person name="Quail M.A."/>
            <person name="Rajandream M.A."/>
            <person name="Rutherford K.M."/>
            <person name="Rutter S."/>
            <person name="Seeger K."/>
            <person name="Simon S."/>
            <person name="Simmonds M."/>
            <person name="Skelton J."/>
            <person name="Squares R."/>
            <person name="Squares S."/>
            <person name="Stevens K."/>
            <person name="Taylor K."/>
            <person name="Whitehead S."/>
            <person name="Woodward J.R."/>
            <person name="Barrell B.G."/>
        </authorList>
    </citation>
    <scope>NUCLEOTIDE SEQUENCE [LARGE SCALE GENOMIC DNA]</scope>
    <source>
        <strain>TN</strain>
    </source>
</reference>
<proteinExistence type="inferred from homology"/>
<accession>Q49897</accession>
<accession>O05675</accession>
<comment type="function">
    <text evidence="1">Involved in the regulation of the intracellular balance of NAD and NADP, and is a key enzyme in the biosynthesis of NADP. Catalyzes specifically the phosphorylation on 2'-hydroxyl of the adenosine moiety of NAD to yield NADP.</text>
</comment>
<comment type="catalytic activity">
    <reaction evidence="1">
        <text>NAD(+) + ATP = ADP + NADP(+) + H(+)</text>
        <dbReference type="Rhea" id="RHEA:18629"/>
        <dbReference type="ChEBI" id="CHEBI:15378"/>
        <dbReference type="ChEBI" id="CHEBI:30616"/>
        <dbReference type="ChEBI" id="CHEBI:57540"/>
        <dbReference type="ChEBI" id="CHEBI:58349"/>
        <dbReference type="ChEBI" id="CHEBI:456216"/>
        <dbReference type="EC" id="2.7.1.23"/>
    </reaction>
</comment>
<comment type="cofactor">
    <cofactor evidence="1">
        <name>a divalent metal cation</name>
        <dbReference type="ChEBI" id="CHEBI:60240"/>
    </cofactor>
</comment>
<comment type="subcellular location">
    <subcellularLocation>
        <location evidence="1">Cytoplasm</location>
    </subcellularLocation>
</comment>
<comment type="similarity">
    <text evidence="1">Belongs to the NAD kinase family.</text>
</comment>
<name>NADK_MYCLE</name>
<gene>
    <name evidence="1" type="primary">nadK</name>
    <name type="ordered locus">ML1359</name>
    <name type="ORF">MLC1351.13c</name>
</gene>
<protein>
    <recommendedName>
        <fullName evidence="1">NAD kinase</fullName>
        <ecNumber evidence="1">2.7.1.23</ecNumber>
    </recommendedName>
    <alternativeName>
        <fullName evidence="1">ATP-dependent NAD kinase</fullName>
    </alternativeName>
</protein>
<feature type="chain" id="PRO_0000120634" description="NAD kinase">
    <location>
        <begin position="1"/>
        <end position="311"/>
    </location>
</feature>
<feature type="active site" description="Proton acceptor" evidence="1">
    <location>
        <position position="89"/>
    </location>
</feature>
<feature type="binding site" evidence="1">
    <location>
        <begin position="89"/>
        <end position="90"/>
    </location>
    <ligand>
        <name>NAD(+)</name>
        <dbReference type="ChEBI" id="CHEBI:57540"/>
    </ligand>
</feature>
<feature type="binding site" evidence="1">
    <location>
        <position position="94"/>
    </location>
    <ligand>
        <name>NAD(+)</name>
        <dbReference type="ChEBI" id="CHEBI:57540"/>
    </ligand>
</feature>
<feature type="binding site" evidence="1">
    <location>
        <begin position="163"/>
        <end position="164"/>
    </location>
    <ligand>
        <name>NAD(+)</name>
        <dbReference type="ChEBI" id="CHEBI:57540"/>
    </ligand>
</feature>
<feature type="binding site" evidence="1">
    <location>
        <position position="193"/>
    </location>
    <ligand>
        <name>NAD(+)</name>
        <dbReference type="ChEBI" id="CHEBI:57540"/>
    </ligand>
</feature>
<feature type="binding site" evidence="1">
    <location>
        <begin position="204"/>
        <end position="209"/>
    </location>
    <ligand>
        <name>NAD(+)</name>
        <dbReference type="ChEBI" id="CHEBI:57540"/>
    </ligand>
</feature>